<sequence length="14" mass="1619">SPLEQFSILMLIPM</sequence>
<accession>P80086</accession>
<geneLocation type="mitochondrion"/>
<gene>
    <name type="primary">ATP6</name>
</gene>
<comment type="function">
    <text>Mitochondrial membrane ATP synthase (F(1)F(0) ATP synthase or Complex V) produces ATP from ADP in the presence of a proton gradient across the membrane which is generated by electron transport complexes of the respiratory chain. F-type ATPases consist of two structural domains, F(1) - containing the extramembraneous catalytic core and F(0) - containing the membrane proton channel, linked together by a central stalk and a peripheral stalk. During catalysis, ATP synthesis in the catalytic domain of F(1) is coupled via a rotary mechanism of the central stalk subunits to proton translocation. Key component of the proton channel; it may play a direct role in the translocation of protons across the membrane.</text>
</comment>
<comment type="subunit">
    <text>F-type ATPases have 2 components, CF(1) - the catalytic core - and CF(0) - the membrane proton channel. CF(1) has five subunits: alpha(3), beta(3), gamma(1), delta(1), epsilon(1). CF(0) has three main subunits: a, b and c.</text>
</comment>
<comment type="subcellular location">
    <subcellularLocation>
        <location>Mitochondrion inner membrane</location>
        <topology>Multi-pass membrane protein</topology>
    </subcellularLocation>
</comment>
<comment type="similarity">
    <text evidence="1">Belongs to the ATPase A chain family.</text>
</comment>
<dbReference type="PIR" id="S21247">
    <property type="entry name" value="S21247"/>
</dbReference>
<dbReference type="Proteomes" id="UP001155700">
    <property type="component" value="Unplaced"/>
</dbReference>
<dbReference type="GO" id="GO:0005743">
    <property type="term" value="C:mitochondrial inner membrane"/>
    <property type="evidence" value="ECO:0007669"/>
    <property type="project" value="UniProtKB-SubCell"/>
</dbReference>
<dbReference type="GO" id="GO:0045259">
    <property type="term" value="C:proton-transporting ATP synthase complex"/>
    <property type="evidence" value="ECO:0007669"/>
    <property type="project" value="UniProtKB-KW"/>
</dbReference>
<dbReference type="GO" id="GO:0006754">
    <property type="term" value="P:ATP biosynthetic process"/>
    <property type="evidence" value="ECO:0007669"/>
    <property type="project" value="UniProtKB-KW"/>
</dbReference>
<dbReference type="GO" id="GO:1902600">
    <property type="term" value="P:proton transmembrane transport"/>
    <property type="evidence" value="ECO:0007669"/>
    <property type="project" value="UniProtKB-KW"/>
</dbReference>
<evidence type="ECO:0000305" key="1"/>
<protein>
    <recommendedName>
        <fullName>ATP synthase subunit a</fullName>
    </recommendedName>
    <alternativeName>
        <fullName>F-ATPase protein 6</fullName>
    </alternativeName>
</protein>
<keyword id="KW-0066">ATP synthesis</keyword>
<keyword id="KW-0138">CF(0)</keyword>
<keyword id="KW-0903">Direct protein sequencing</keyword>
<keyword id="KW-0375">Hydrogen ion transport</keyword>
<keyword id="KW-0406">Ion transport</keyword>
<keyword id="KW-0472">Membrane</keyword>
<keyword id="KW-0496">Mitochondrion</keyword>
<keyword id="KW-0999">Mitochondrion inner membrane</keyword>
<keyword id="KW-1185">Reference proteome</keyword>
<keyword id="KW-0812">Transmembrane</keyword>
<keyword id="KW-0813">Transport</keyword>
<feature type="chain" id="PRO_0000082171" description="ATP synthase subunit a">
    <location>
        <begin position="1"/>
        <end position="14" status="greater than"/>
    </location>
</feature>
<feature type="non-terminal residue">
    <location>
        <position position="14"/>
    </location>
</feature>
<name>ATP6_SPIOL</name>
<proteinExistence type="evidence at protein level"/>
<organism>
    <name type="scientific">Spinacia oleracea</name>
    <name type="common">Spinach</name>
    <dbReference type="NCBI Taxonomy" id="3562"/>
    <lineage>
        <taxon>Eukaryota</taxon>
        <taxon>Viridiplantae</taxon>
        <taxon>Streptophyta</taxon>
        <taxon>Embryophyta</taxon>
        <taxon>Tracheophyta</taxon>
        <taxon>Spermatophyta</taxon>
        <taxon>Magnoliopsida</taxon>
        <taxon>eudicotyledons</taxon>
        <taxon>Gunneridae</taxon>
        <taxon>Pentapetalae</taxon>
        <taxon>Caryophyllales</taxon>
        <taxon>Chenopodiaceae</taxon>
        <taxon>Chenopodioideae</taxon>
        <taxon>Anserineae</taxon>
        <taxon>Spinacia</taxon>
    </lineage>
</organism>
<reference key="1">
    <citation type="journal article" date="1992" name="Eur. J. Biochem.">
        <title>Plant mitochondrial F0F1 ATP synthase. Identification of the individual subunits and properties of the purified spinach leaf mitochondrial ATP synthase.</title>
        <authorList>
            <person name="Hamasur B."/>
            <person name="Glaser E."/>
        </authorList>
    </citation>
    <scope>PROTEIN SEQUENCE</scope>
    <source>
        <strain>cv. Medania</strain>
        <tissue>Leaf mesophyll</tissue>
    </source>
</reference>